<dbReference type="EC" id="1.2.1.38" evidence="1"/>
<dbReference type="EMBL" id="CP001161">
    <property type="protein sequence ID" value="ACL30428.1"/>
    <property type="molecule type" value="Genomic_DNA"/>
</dbReference>
<dbReference type="RefSeq" id="WP_009874005.1">
    <property type="nucleotide sequence ID" value="NC_011833.1"/>
</dbReference>
<dbReference type="SMR" id="B8D8K6"/>
<dbReference type="KEGG" id="bap:BUAP5A_047"/>
<dbReference type="HOGENOM" id="CLU_006384_0_1_6"/>
<dbReference type="OrthoDB" id="9801289at2"/>
<dbReference type="UniPathway" id="UPA00068">
    <property type="reaction ID" value="UER00108"/>
</dbReference>
<dbReference type="Proteomes" id="UP000006904">
    <property type="component" value="Chromosome"/>
</dbReference>
<dbReference type="GO" id="GO:0005737">
    <property type="term" value="C:cytoplasm"/>
    <property type="evidence" value="ECO:0007669"/>
    <property type="project" value="UniProtKB-SubCell"/>
</dbReference>
<dbReference type="GO" id="GO:0003942">
    <property type="term" value="F:N-acetyl-gamma-glutamyl-phosphate reductase activity"/>
    <property type="evidence" value="ECO:0007669"/>
    <property type="project" value="UniProtKB-UniRule"/>
</dbReference>
<dbReference type="GO" id="GO:0051287">
    <property type="term" value="F:NAD binding"/>
    <property type="evidence" value="ECO:0007669"/>
    <property type="project" value="InterPro"/>
</dbReference>
<dbReference type="GO" id="GO:0070401">
    <property type="term" value="F:NADP+ binding"/>
    <property type="evidence" value="ECO:0007669"/>
    <property type="project" value="InterPro"/>
</dbReference>
<dbReference type="GO" id="GO:0006526">
    <property type="term" value="P:L-arginine biosynthetic process"/>
    <property type="evidence" value="ECO:0007669"/>
    <property type="project" value="UniProtKB-UniRule"/>
</dbReference>
<dbReference type="CDD" id="cd23934">
    <property type="entry name" value="AGPR_1_C"/>
    <property type="match status" value="1"/>
</dbReference>
<dbReference type="CDD" id="cd17895">
    <property type="entry name" value="AGPR_1_N"/>
    <property type="match status" value="1"/>
</dbReference>
<dbReference type="FunFam" id="3.30.360.10:FF:000014">
    <property type="entry name" value="N-acetyl-gamma-glutamyl-phosphate reductase"/>
    <property type="match status" value="1"/>
</dbReference>
<dbReference type="Gene3D" id="3.30.360.10">
    <property type="entry name" value="Dihydrodipicolinate Reductase, domain 2"/>
    <property type="match status" value="1"/>
</dbReference>
<dbReference type="Gene3D" id="3.40.50.720">
    <property type="entry name" value="NAD(P)-binding Rossmann-like Domain"/>
    <property type="match status" value="1"/>
</dbReference>
<dbReference type="HAMAP" id="MF_00150">
    <property type="entry name" value="ArgC_type1"/>
    <property type="match status" value="1"/>
</dbReference>
<dbReference type="InterPro" id="IPR023013">
    <property type="entry name" value="AGPR_AS"/>
</dbReference>
<dbReference type="InterPro" id="IPR000706">
    <property type="entry name" value="AGPR_type-1"/>
</dbReference>
<dbReference type="InterPro" id="IPR036291">
    <property type="entry name" value="NAD(P)-bd_dom_sf"/>
</dbReference>
<dbReference type="InterPro" id="IPR050085">
    <property type="entry name" value="NAGSA_dehydrogenase"/>
</dbReference>
<dbReference type="InterPro" id="IPR000534">
    <property type="entry name" value="Semialdehyde_DH_NAD-bd"/>
</dbReference>
<dbReference type="NCBIfam" id="TIGR01850">
    <property type="entry name" value="argC"/>
    <property type="match status" value="1"/>
</dbReference>
<dbReference type="PANTHER" id="PTHR32338:SF10">
    <property type="entry name" value="N-ACETYL-GAMMA-GLUTAMYL-PHOSPHATE REDUCTASE, CHLOROPLASTIC-RELATED"/>
    <property type="match status" value="1"/>
</dbReference>
<dbReference type="PANTHER" id="PTHR32338">
    <property type="entry name" value="N-ACETYL-GAMMA-GLUTAMYL-PHOSPHATE REDUCTASE, CHLOROPLASTIC-RELATED-RELATED"/>
    <property type="match status" value="1"/>
</dbReference>
<dbReference type="Pfam" id="PF01118">
    <property type="entry name" value="Semialdhyde_dh"/>
    <property type="match status" value="1"/>
</dbReference>
<dbReference type="Pfam" id="PF22698">
    <property type="entry name" value="Semialdhyde_dhC_1"/>
    <property type="match status" value="1"/>
</dbReference>
<dbReference type="SMART" id="SM00859">
    <property type="entry name" value="Semialdhyde_dh"/>
    <property type="match status" value="1"/>
</dbReference>
<dbReference type="SUPFAM" id="SSF55347">
    <property type="entry name" value="Glyceraldehyde-3-phosphate dehydrogenase-like, C-terminal domain"/>
    <property type="match status" value="1"/>
</dbReference>
<dbReference type="SUPFAM" id="SSF51735">
    <property type="entry name" value="NAD(P)-binding Rossmann-fold domains"/>
    <property type="match status" value="1"/>
</dbReference>
<dbReference type="PROSITE" id="PS01224">
    <property type="entry name" value="ARGC"/>
    <property type="match status" value="1"/>
</dbReference>
<accession>B8D8K6</accession>
<sequence>MLNVVIVGASGYAGAELVNYMHRHRFANIKKIFVSKNSLNIDKLFSDVHQQFKNIVDLRFDTIRNCTLIKKNIDAVFLATDHRVSHSLVPFFLSSNCIVFDLSASYRMNNKKVYLDYYGFVHEYEELLKNSVYGLAEWEQEKIKKANLIALPGCYATCIQLALKPLIKENVLCDKNIPIINAISGVSGAGRKASLNNSFCEVSLQPYNIFTHRHTPEIIEKLGVPVIFIPHLGPFSRGIIATITCKLKPNVKSIDIHNIFNKFYKNKPLIRIYKKYLPSIKSVEKQPFCDIGFVIKDDYIVIVAAEDNLLKGAAAQAVQCFNVRFGFSETESII</sequence>
<name>ARGC_BUCA5</name>
<feature type="chain" id="PRO_1000123236" description="N-acetyl-gamma-glutamyl-phosphate reductase">
    <location>
        <begin position="1"/>
        <end position="334"/>
    </location>
</feature>
<feature type="active site" evidence="1">
    <location>
        <position position="154"/>
    </location>
</feature>
<keyword id="KW-0028">Amino-acid biosynthesis</keyword>
<keyword id="KW-0055">Arginine biosynthesis</keyword>
<keyword id="KW-0963">Cytoplasm</keyword>
<keyword id="KW-0521">NADP</keyword>
<keyword id="KW-0560">Oxidoreductase</keyword>
<evidence type="ECO:0000255" key="1">
    <source>
        <dbReference type="HAMAP-Rule" id="MF_00150"/>
    </source>
</evidence>
<proteinExistence type="inferred from homology"/>
<comment type="function">
    <text evidence="1">Catalyzes the NADPH-dependent reduction of N-acetyl-5-glutamyl phosphate to yield N-acetyl-L-glutamate 5-semialdehyde.</text>
</comment>
<comment type="catalytic activity">
    <reaction evidence="1">
        <text>N-acetyl-L-glutamate 5-semialdehyde + phosphate + NADP(+) = N-acetyl-L-glutamyl 5-phosphate + NADPH + H(+)</text>
        <dbReference type="Rhea" id="RHEA:21588"/>
        <dbReference type="ChEBI" id="CHEBI:15378"/>
        <dbReference type="ChEBI" id="CHEBI:29123"/>
        <dbReference type="ChEBI" id="CHEBI:43474"/>
        <dbReference type="ChEBI" id="CHEBI:57783"/>
        <dbReference type="ChEBI" id="CHEBI:57936"/>
        <dbReference type="ChEBI" id="CHEBI:58349"/>
        <dbReference type="EC" id="1.2.1.38"/>
    </reaction>
</comment>
<comment type="pathway">
    <text evidence="1">Amino-acid biosynthesis; L-arginine biosynthesis; N(2)-acetyl-L-ornithine from L-glutamate: step 3/4.</text>
</comment>
<comment type="subcellular location">
    <subcellularLocation>
        <location evidence="1">Cytoplasm</location>
    </subcellularLocation>
</comment>
<comment type="similarity">
    <text evidence="1">Belongs to the NAGSA dehydrogenase family. Type 1 subfamily.</text>
</comment>
<organism>
    <name type="scientific">Buchnera aphidicola subsp. Acyrthosiphon pisum (strain 5A)</name>
    <dbReference type="NCBI Taxonomy" id="563178"/>
    <lineage>
        <taxon>Bacteria</taxon>
        <taxon>Pseudomonadati</taxon>
        <taxon>Pseudomonadota</taxon>
        <taxon>Gammaproteobacteria</taxon>
        <taxon>Enterobacterales</taxon>
        <taxon>Erwiniaceae</taxon>
        <taxon>Buchnera</taxon>
    </lineage>
</organism>
<reference key="1">
    <citation type="journal article" date="2009" name="Science">
        <title>The dynamics and time scale of ongoing genomic erosion in symbiotic bacteria.</title>
        <authorList>
            <person name="Moran N.A."/>
            <person name="McLaughlin H.J."/>
            <person name="Sorek R."/>
        </authorList>
    </citation>
    <scope>NUCLEOTIDE SEQUENCE [LARGE SCALE GENOMIC DNA]</scope>
    <source>
        <strain>5A</strain>
    </source>
</reference>
<gene>
    <name evidence="1" type="primary">argC</name>
    <name type="ordered locus">BUAP5A_047</name>
</gene>
<protein>
    <recommendedName>
        <fullName evidence="1">N-acetyl-gamma-glutamyl-phosphate reductase</fullName>
        <shortName evidence="1">AGPR</shortName>
        <ecNumber evidence="1">1.2.1.38</ecNumber>
    </recommendedName>
    <alternativeName>
        <fullName evidence="1">N-acetyl-glutamate semialdehyde dehydrogenase</fullName>
        <shortName evidence="1">NAGSA dehydrogenase</shortName>
    </alternativeName>
</protein>